<comment type="function">
    <text evidence="1">Catalyzes the condensation of carbamoyl phosphate and aspartate to form carbamoyl aspartate and inorganic phosphate, the committed step in the de novo pyrimidine nucleotide biosynthesis pathway.</text>
</comment>
<comment type="catalytic activity">
    <reaction evidence="1">
        <text>carbamoyl phosphate + L-aspartate = N-carbamoyl-L-aspartate + phosphate + H(+)</text>
        <dbReference type="Rhea" id="RHEA:20013"/>
        <dbReference type="ChEBI" id="CHEBI:15378"/>
        <dbReference type="ChEBI" id="CHEBI:29991"/>
        <dbReference type="ChEBI" id="CHEBI:32814"/>
        <dbReference type="ChEBI" id="CHEBI:43474"/>
        <dbReference type="ChEBI" id="CHEBI:58228"/>
        <dbReference type="EC" id="2.1.3.2"/>
    </reaction>
</comment>
<comment type="pathway">
    <text evidence="1">Pyrimidine metabolism; UMP biosynthesis via de novo pathway; (S)-dihydroorotate from bicarbonate: step 2/3.</text>
</comment>
<comment type="subunit">
    <text evidence="1">Heterododecamer (2C3:3R2) of six catalytic PyrB chains organized as two trimers (C3), and six regulatory PyrI chains organized as three dimers (R2).</text>
</comment>
<comment type="similarity">
    <text evidence="1">Belongs to the aspartate/ornithine carbamoyltransferase superfamily. ATCase family.</text>
</comment>
<keyword id="KW-0665">Pyrimidine biosynthesis</keyword>
<keyword id="KW-1185">Reference proteome</keyword>
<keyword id="KW-0808">Transferase</keyword>
<proteinExistence type="inferred from homology"/>
<evidence type="ECO:0000255" key="1">
    <source>
        <dbReference type="HAMAP-Rule" id="MF_00001"/>
    </source>
</evidence>
<organism>
    <name type="scientific">Cupriavidus necator (strain ATCC 17699 / DSM 428 / KCTC 22496 / NCIMB 10442 / H16 / Stanier 337)</name>
    <name type="common">Ralstonia eutropha</name>
    <dbReference type="NCBI Taxonomy" id="381666"/>
    <lineage>
        <taxon>Bacteria</taxon>
        <taxon>Pseudomonadati</taxon>
        <taxon>Pseudomonadota</taxon>
        <taxon>Betaproteobacteria</taxon>
        <taxon>Burkholderiales</taxon>
        <taxon>Burkholderiaceae</taxon>
        <taxon>Cupriavidus</taxon>
    </lineage>
</organism>
<gene>
    <name evidence="1" type="primary">pyrB</name>
    <name type="ordered locus">H16_A2913</name>
</gene>
<feature type="chain" id="PRO_0000321145" description="Aspartate carbamoyltransferase catalytic subunit">
    <location>
        <begin position="1"/>
        <end position="324"/>
    </location>
</feature>
<feature type="binding site" evidence="1">
    <location>
        <position position="71"/>
    </location>
    <ligand>
        <name>carbamoyl phosphate</name>
        <dbReference type="ChEBI" id="CHEBI:58228"/>
    </ligand>
</feature>
<feature type="binding site" evidence="1">
    <location>
        <position position="72"/>
    </location>
    <ligand>
        <name>carbamoyl phosphate</name>
        <dbReference type="ChEBI" id="CHEBI:58228"/>
    </ligand>
</feature>
<feature type="binding site" evidence="1">
    <location>
        <position position="99"/>
    </location>
    <ligand>
        <name>L-aspartate</name>
        <dbReference type="ChEBI" id="CHEBI:29991"/>
    </ligand>
</feature>
<feature type="binding site" evidence="1">
    <location>
        <position position="121"/>
    </location>
    <ligand>
        <name>carbamoyl phosphate</name>
        <dbReference type="ChEBI" id="CHEBI:58228"/>
    </ligand>
</feature>
<feature type="binding site" evidence="1">
    <location>
        <position position="151"/>
    </location>
    <ligand>
        <name>carbamoyl phosphate</name>
        <dbReference type="ChEBI" id="CHEBI:58228"/>
    </ligand>
</feature>
<feature type="binding site" evidence="1">
    <location>
        <position position="154"/>
    </location>
    <ligand>
        <name>carbamoyl phosphate</name>
        <dbReference type="ChEBI" id="CHEBI:58228"/>
    </ligand>
</feature>
<feature type="binding site" evidence="1">
    <location>
        <position position="184"/>
    </location>
    <ligand>
        <name>L-aspartate</name>
        <dbReference type="ChEBI" id="CHEBI:29991"/>
    </ligand>
</feature>
<feature type="binding site" evidence="1">
    <location>
        <position position="239"/>
    </location>
    <ligand>
        <name>L-aspartate</name>
        <dbReference type="ChEBI" id="CHEBI:29991"/>
    </ligand>
</feature>
<feature type="binding site" evidence="1">
    <location>
        <position position="280"/>
    </location>
    <ligand>
        <name>carbamoyl phosphate</name>
        <dbReference type="ChEBI" id="CHEBI:58228"/>
    </ligand>
</feature>
<feature type="binding site" evidence="1">
    <location>
        <position position="281"/>
    </location>
    <ligand>
        <name>carbamoyl phosphate</name>
        <dbReference type="ChEBI" id="CHEBI:58228"/>
    </ligand>
</feature>
<protein>
    <recommendedName>
        <fullName evidence="1">Aspartate carbamoyltransferase catalytic subunit</fullName>
        <ecNumber evidence="1">2.1.3.2</ecNumber>
    </recommendedName>
    <alternativeName>
        <fullName evidence="1">Aspartate transcarbamylase</fullName>
        <shortName evidence="1">ATCase</shortName>
    </alternativeName>
</protein>
<accession>Q0K7N2</accession>
<reference key="1">
    <citation type="journal article" date="2006" name="Nat. Biotechnol.">
        <title>Genome sequence of the bioplastic-producing 'Knallgas' bacterium Ralstonia eutropha H16.</title>
        <authorList>
            <person name="Pohlmann A."/>
            <person name="Fricke W.F."/>
            <person name="Reinecke F."/>
            <person name="Kusian B."/>
            <person name="Liesegang H."/>
            <person name="Cramm R."/>
            <person name="Eitinger T."/>
            <person name="Ewering C."/>
            <person name="Poetter M."/>
            <person name="Schwartz E."/>
            <person name="Strittmatter A."/>
            <person name="Voss I."/>
            <person name="Gottschalk G."/>
            <person name="Steinbuechel A."/>
            <person name="Friedrich B."/>
            <person name="Bowien B."/>
        </authorList>
    </citation>
    <scope>NUCLEOTIDE SEQUENCE [LARGE SCALE GENOMIC DNA]</scope>
    <source>
        <strain>ATCC 17699 / DSM 428 / KCTC 22496 / NCIMB 10442 / H16 / Stanier 337</strain>
    </source>
</reference>
<dbReference type="EC" id="2.1.3.2" evidence="1"/>
<dbReference type="EMBL" id="AM260479">
    <property type="protein sequence ID" value="CAJ93989.1"/>
    <property type="molecule type" value="Genomic_DNA"/>
</dbReference>
<dbReference type="RefSeq" id="WP_010813825.1">
    <property type="nucleotide sequence ID" value="NZ_CP039287.1"/>
</dbReference>
<dbReference type="SMR" id="Q0K7N2"/>
<dbReference type="STRING" id="381666.H16_A2913"/>
<dbReference type="KEGG" id="reh:H16_A2913"/>
<dbReference type="eggNOG" id="COG0540">
    <property type="taxonomic scope" value="Bacteria"/>
</dbReference>
<dbReference type="HOGENOM" id="CLU_043846_2_0_4"/>
<dbReference type="OrthoDB" id="9774690at2"/>
<dbReference type="UniPathway" id="UPA00070">
    <property type="reaction ID" value="UER00116"/>
</dbReference>
<dbReference type="Proteomes" id="UP000008210">
    <property type="component" value="Chromosome 1"/>
</dbReference>
<dbReference type="GO" id="GO:0005829">
    <property type="term" value="C:cytosol"/>
    <property type="evidence" value="ECO:0007669"/>
    <property type="project" value="TreeGrafter"/>
</dbReference>
<dbReference type="GO" id="GO:0016597">
    <property type="term" value="F:amino acid binding"/>
    <property type="evidence" value="ECO:0007669"/>
    <property type="project" value="InterPro"/>
</dbReference>
<dbReference type="GO" id="GO:0004070">
    <property type="term" value="F:aspartate carbamoyltransferase activity"/>
    <property type="evidence" value="ECO:0007669"/>
    <property type="project" value="UniProtKB-UniRule"/>
</dbReference>
<dbReference type="GO" id="GO:0006207">
    <property type="term" value="P:'de novo' pyrimidine nucleobase biosynthetic process"/>
    <property type="evidence" value="ECO:0007669"/>
    <property type="project" value="InterPro"/>
</dbReference>
<dbReference type="GO" id="GO:0044205">
    <property type="term" value="P:'de novo' UMP biosynthetic process"/>
    <property type="evidence" value="ECO:0007669"/>
    <property type="project" value="UniProtKB-UniRule"/>
</dbReference>
<dbReference type="GO" id="GO:0006520">
    <property type="term" value="P:amino acid metabolic process"/>
    <property type="evidence" value="ECO:0007669"/>
    <property type="project" value="InterPro"/>
</dbReference>
<dbReference type="FunFam" id="3.40.50.1370:FF:000007">
    <property type="entry name" value="Aspartate carbamoyltransferase"/>
    <property type="match status" value="1"/>
</dbReference>
<dbReference type="Gene3D" id="3.40.50.1370">
    <property type="entry name" value="Aspartate/ornithine carbamoyltransferase"/>
    <property type="match status" value="2"/>
</dbReference>
<dbReference type="HAMAP" id="MF_00001">
    <property type="entry name" value="Asp_carb_tr"/>
    <property type="match status" value="1"/>
</dbReference>
<dbReference type="InterPro" id="IPR006132">
    <property type="entry name" value="Asp/Orn_carbamoyltranf_P-bd"/>
</dbReference>
<dbReference type="InterPro" id="IPR006130">
    <property type="entry name" value="Asp/Orn_carbamoylTrfase"/>
</dbReference>
<dbReference type="InterPro" id="IPR036901">
    <property type="entry name" value="Asp/Orn_carbamoylTrfase_sf"/>
</dbReference>
<dbReference type="InterPro" id="IPR002082">
    <property type="entry name" value="Asp_carbamoyltransf"/>
</dbReference>
<dbReference type="InterPro" id="IPR006131">
    <property type="entry name" value="Asp_carbamoyltransf_Asp/Orn-bd"/>
</dbReference>
<dbReference type="NCBIfam" id="TIGR00670">
    <property type="entry name" value="asp_carb_tr"/>
    <property type="match status" value="1"/>
</dbReference>
<dbReference type="NCBIfam" id="NF002032">
    <property type="entry name" value="PRK00856.1"/>
    <property type="match status" value="1"/>
</dbReference>
<dbReference type="PANTHER" id="PTHR45753:SF6">
    <property type="entry name" value="ASPARTATE CARBAMOYLTRANSFERASE"/>
    <property type="match status" value="1"/>
</dbReference>
<dbReference type="PANTHER" id="PTHR45753">
    <property type="entry name" value="ORNITHINE CARBAMOYLTRANSFERASE, MITOCHONDRIAL"/>
    <property type="match status" value="1"/>
</dbReference>
<dbReference type="Pfam" id="PF00185">
    <property type="entry name" value="OTCace"/>
    <property type="match status" value="1"/>
</dbReference>
<dbReference type="Pfam" id="PF02729">
    <property type="entry name" value="OTCace_N"/>
    <property type="match status" value="1"/>
</dbReference>
<dbReference type="PRINTS" id="PR00100">
    <property type="entry name" value="AOTCASE"/>
</dbReference>
<dbReference type="PRINTS" id="PR00101">
    <property type="entry name" value="ATCASE"/>
</dbReference>
<dbReference type="SUPFAM" id="SSF53671">
    <property type="entry name" value="Aspartate/ornithine carbamoyltransferase"/>
    <property type="match status" value="1"/>
</dbReference>
<dbReference type="PROSITE" id="PS00097">
    <property type="entry name" value="CARBAMOYLTRANSFERASE"/>
    <property type="match status" value="1"/>
</dbReference>
<name>PYRB_CUPNH</name>
<sequence length="324" mass="35368">MTKTFRNPQLTKNGELKHLLSIEGLSRDMITHILDTASQFVSLSDSDRDVKKVPLLRGKSVFNLFFENSTRTRTTFEIAAKRLSADVLNLNINASSTSKGESLLDTINNLSAMSADMFVVRHASSGAPYLIAEHVAPHVHVINAGDGRHAHPTQGLLDMYTIRHFKKDFTNLTVAIVGDILHSRVARSDIHALTTLGVPEVRAIGPRTLLPSGLEQMGVRVFHDMEEGLKGVDVVIMLRLQNERMSGALLPSAQEYFKAYGLTPERLALANRDAIVMHPGPMNRGVEIDSAVADGPQSVILNQVTFGIAVRMAVMGIVAGNSDE</sequence>